<gene>
    <name evidence="1" type="primary">cyaY</name>
    <name type="ordered locus">Sbal195_4092</name>
</gene>
<dbReference type="EMBL" id="CP000891">
    <property type="protein sequence ID" value="ABX51252.1"/>
    <property type="molecule type" value="Genomic_DNA"/>
</dbReference>
<dbReference type="RefSeq" id="WP_006083426.1">
    <property type="nucleotide sequence ID" value="NC_009997.1"/>
</dbReference>
<dbReference type="SMR" id="A9L5F8"/>
<dbReference type="GeneID" id="11774085"/>
<dbReference type="KEGG" id="sbn:Sbal195_4092"/>
<dbReference type="HOGENOM" id="CLU_080880_3_0_6"/>
<dbReference type="Proteomes" id="UP000000770">
    <property type="component" value="Chromosome"/>
</dbReference>
<dbReference type="GO" id="GO:0005829">
    <property type="term" value="C:cytosol"/>
    <property type="evidence" value="ECO:0007669"/>
    <property type="project" value="TreeGrafter"/>
</dbReference>
<dbReference type="GO" id="GO:0008199">
    <property type="term" value="F:ferric iron binding"/>
    <property type="evidence" value="ECO:0007669"/>
    <property type="project" value="InterPro"/>
</dbReference>
<dbReference type="GO" id="GO:0008198">
    <property type="term" value="F:ferrous iron binding"/>
    <property type="evidence" value="ECO:0007669"/>
    <property type="project" value="TreeGrafter"/>
</dbReference>
<dbReference type="GO" id="GO:0016226">
    <property type="term" value="P:iron-sulfur cluster assembly"/>
    <property type="evidence" value="ECO:0007669"/>
    <property type="project" value="UniProtKB-UniRule"/>
</dbReference>
<dbReference type="CDD" id="cd00503">
    <property type="entry name" value="Frataxin"/>
    <property type="match status" value="1"/>
</dbReference>
<dbReference type="FunFam" id="3.30.920.10:FF:000005">
    <property type="entry name" value="Iron-sulfur cluster assembly protein CyaY"/>
    <property type="match status" value="1"/>
</dbReference>
<dbReference type="Gene3D" id="3.30.920.10">
    <property type="entry name" value="Frataxin/CyaY"/>
    <property type="match status" value="1"/>
</dbReference>
<dbReference type="HAMAP" id="MF_00142">
    <property type="entry name" value="CyaY"/>
    <property type="match status" value="1"/>
</dbReference>
<dbReference type="InterPro" id="IPR047584">
    <property type="entry name" value="CyaY"/>
</dbReference>
<dbReference type="InterPro" id="IPR002908">
    <property type="entry name" value="Frataxin/CyaY"/>
</dbReference>
<dbReference type="InterPro" id="IPR036524">
    <property type="entry name" value="Frataxin/CyaY_sf"/>
</dbReference>
<dbReference type="InterPro" id="IPR020895">
    <property type="entry name" value="Frataxin_CS"/>
</dbReference>
<dbReference type="NCBIfam" id="TIGR03421">
    <property type="entry name" value="FeS_CyaY"/>
    <property type="match status" value="1"/>
</dbReference>
<dbReference type="PANTHER" id="PTHR16821">
    <property type="entry name" value="FRATAXIN"/>
    <property type="match status" value="1"/>
</dbReference>
<dbReference type="PANTHER" id="PTHR16821:SF2">
    <property type="entry name" value="FRATAXIN, MITOCHONDRIAL"/>
    <property type="match status" value="1"/>
</dbReference>
<dbReference type="Pfam" id="PF01491">
    <property type="entry name" value="Frataxin_Cyay"/>
    <property type="match status" value="1"/>
</dbReference>
<dbReference type="SMART" id="SM01219">
    <property type="entry name" value="Frataxin_Cyay"/>
    <property type="match status" value="1"/>
</dbReference>
<dbReference type="SUPFAM" id="SSF55387">
    <property type="entry name" value="Frataxin/Nqo15-like"/>
    <property type="match status" value="1"/>
</dbReference>
<dbReference type="PROSITE" id="PS01344">
    <property type="entry name" value="FRATAXIN_1"/>
    <property type="match status" value="1"/>
</dbReference>
<dbReference type="PROSITE" id="PS50810">
    <property type="entry name" value="FRATAXIN_2"/>
    <property type="match status" value="1"/>
</dbReference>
<protein>
    <recommendedName>
        <fullName evidence="1">Iron-sulfur cluster assembly protein CyaY</fullName>
    </recommendedName>
</protein>
<proteinExistence type="inferred from homology"/>
<accession>A9L5F8</accession>
<comment type="function">
    <text evidence="1">Involved in iron-sulfur (Fe-S) cluster assembly. May act as a regulator of Fe-S biogenesis.</text>
</comment>
<comment type="similarity">
    <text evidence="1">Belongs to the frataxin family.</text>
</comment>
<reference key="1">
    <citation type="submission" date="2007-11" db="EMBL/GenBank/DDBJ databases">
        <title>Complete sequence of chromosome of Shewanella baltica OS195.</title>
        <authorList>
            <consortium name="US DOE Joint Genome Institute"/>
            <person name="Copeland A."/>
            <person name="Lucas S."/>
            <person name="Lapidus A."/>
            <person name="Barry K."/>
            <person name="Glavina del Rio T."/>
            <person name="Dalin E."/>
            <person name="Tice H."/>
            <person name="Pitluck S."/>
            <person name="Chain P."/>
            <person name="Malfatti S."/>
            <person name="Shin M."/>
            <person name="Vergez L."/>
            <person name="Schmutz J."/>
            <person name="Larimer F."/>
            <person name="Land M."/>
            <person name="Hauser L."/>
            <person name="Kyrpides N."/>
            <person name="Kim E."/>
            <person name="Brettar I."/>
            <person name="Rodrigues J."/>
            <person name="Konstantinidis K."/>
            <person name="Klappenbach J."/>
            <person name="Hofle M."/>
            <person name="Tiedje J."/>
            <person name="Richardson P."/>
        </authorList>
    </citation>
    <scope>NUCLEOTIDE SEQUENCE [LARGE SCALE GENOMIC DNA]</scope>
    <source>
        <strain>OS195</strain>
    </source>
</reference>
<sequence length="109" mass="12255">MAITDTEFHQLADDMFQAIENAIETAIDEQDADVDIDASGNVLQLEFVDGSKIVINKQEPLHEIWVATRFGGYHFGFVEGKWMDGRNGGEFMPFVQESIERQGGIKLSF</sequence>
<evidence type="ECO:0000255" key="1">
    <source>
        <dbReference type="HAMAP-Rule" id="MF_00142"/>
    </source>
</evidence>
<keyword id="KW-0408">Iron</keyword>
<keyword id="KW-0479">Metal-binding</keyword>
<name>CYAY_SHEB9</name>
<organism>
    <name type="scientific">Shewanella baltica (strain OS195)</name>
    <dbReference type="NCBI Taxonomy" id="399599"/>
    <lineage>
        <taxon>Bacteria</taxon>
        <taxon>Pseudomonadati</taxon>
        <taxon>Pseudomonadota</taxon>
        <taxon>Gammaproteobacteria</taxon>
        <taxon>Alteromonadales</taxon>
        <taxon>Shewanellaceae</taxon>
        <taxon>Shewanella</taxon>
    </lineage>
</organism>
<feature type="chain" id="PRO_1000076551" description="Iron-sulfur cluster assembly protein CyaY">
    <location>
        <begin position="1"/>
        <end position="109"/>
    </location>
</feature>